<proteinExistence type="inferred from homology"/>
<protein>
    <recommendedName>
        <fullName evidence="2">L-erythrulose-1-phosphate isomerase</fullName>
        <ecNumber evidence="2">5.3.1.33</ecNumber>
    </recommendedName>
    <alternativeName>
        <fullName evidence="2">D-3-tetrulose-4-phosphate isomerase</fullName>
    </alternativeName>
</protein>
<accession>P0C119</accession>
<accession>Q578Z0</accession>
<accession>Q9ZB27</accession>
<comment type="function">
    <text evidence="2">Catalyzes the isomerization of D-erythrulose-4P to L-erythrulose-1P.</text>
</comment>
<comment type="catalytic activity">
    <reaction evidence="2">
        <text>L-erythrulose 1-phosphate = D-erythrulose 4-phosphate</text>
        <dbReference type="Rhea" id="RHEA:49588"/>
        <dbReference type="ChEBI" id="CHEBI:58002"/>
        <dbReference type="ChEBI" id="CHEBI:90796"/>
        <dbReference type="EC" id="5.3.1.33"/>
    </reaction>
</comment>
<comment type="pathway">
    <text evidence="2">Carbohydrate metabolism; erythritol degradation.</text>
</comment>
<comment type="subunit">
    <text evidence="1">Homodimer.</text>
</comment>
<comment type="subcellular location">
    <subcellularLocation>
        <location evidence="1">Cytoplasm</location>
    </subcellularLocation>
</comment>
<comment type="similarity">
    <text evidence="3">Belongs to the triosephosphate isomerase family.</text>
</comment>
<reference key="1">
    <citation type="journal article" date="2005" name="J. Bacteriol.">
        <title>Completion of the genome sequence of Brucella abortus and comparison to the highly similar genomes of Brucella melitensis and Brucella suis.</title>
        <authorList>
            <person name="Halling S.M."/>
            <person name="Peterson-Burch B.D."/>
            <person name="Bricker B.J."/>
            <person name="Zuerner R.L."/>
            <person name="Qing Z."/>
            <person name="Li L.-L."/>
            <person name="Kapur V."/>
            <person name="Alt D.P."/>
            <person name="Olsen S.C."/>
        </authorList>
    </citation>
    <scope>NUCLEOTIDE SEQUENCE [LARGE SCALE GENOMIC DNA]</scope>
    <source>
        <strain>9-941</strain>
    </source>
</reference>
<organism>
    <name type="scientific">Brucella abortus biovar 1 (strain 9-941)</name>
    <dbReference type="NCBI Taxonomy" id="262698"/>
    <lineage>
        <taxon>Bacteria</taxon>
        <taxon>Pseudomonadati</taxon>
        <taxon>Pseudomonadota</taxon>
        <taxon>Alphaproteobacteria</taxon>
        <taxon>Hyphomicrobiales</taxon>
        <taxon>Brucellaceae</taxon>
        <taxon>Brucella/Ochrobactrum group</taxon>
        <taxon>Brucella</taxon>
    </lineage>
</organism>
<sequence>MTKFWIGTSWKMNKTLAEARLFAEALKAADAGRSPDIQRFVIPPFTAVREVKEILSGTSVKVGAQNMHWADQGAWTGEISPLMLKDCNLDIVELGHSERREHFGETNETVGLKVEAAVRHGLIPLICIGETLEDRESGRAAAVLEEEVRGALSKLSEAQKQAEILFAYEPVWAIGENGIPASADYADARQAEIIAVAQSVLARRVPCLYGGSVNPGNCEELIACPHIDGLFIGRSAWNVEGYLDILARCATKVQAN</sequence>
<dbReference type="EC" id="5.3.1.33" evidence="2"/>
<dbReference type="EMBL" id="AE017224">
    <property type="protein sequence ID" value="AAX75794.1"/>
    <property type="molecule type" value="Genomic_DNA"/>
</dbReference>
<dbReference type="RefSeq" id="WP_002965777.1">
    <property type="nucleotide sequence ID" value="NC_006933.1"/>
</dbReference>
<dbReference type="SMR" id="P0C119"/>
<dbReference type="EnsemblBacteria" id="AAX75794">
    <property type="protein sequence ID" value="AAX75794"/>
    <property type="gene ID" value="BruAb2_0363"/>
</dbReference>
<dbReference type="KEGG" id="bmb:BruAb2_0363"/>
<dbReference type="HOGENOM" id="CLU_024251_2_3_5"/>
<dbReference type="UniPathway" id="UPA01066"/>
<dbReference type="Proteomes" id="UP000000540">
    <property type="component" value="Chromosome II"/>
</dbReference>
<dbReference type="GO" id="GO:0005829">
    <property type="term" value="C:cytosol"/>
    <property type="evidence" value="ECO:0007669"/>
    <property type="project" value="TreeGrafter"/>
</dbReference>
<dbReference type="GO" id="GO:0004807">
    <property type="term" value="F:triose-phosphate isomerase activity"/>
    <property type="evidence" value="ECO:0007669"/>
    <property type="project" value="InterPro"/>
</dbReference>
<dbReference type="GO" id="GO:0006094">
    <property type="term" value="P:gluconeogenesis"/>
    <property type="evidence" value="ECO:0007669"/>
    <property type="project" value="UniProtKB-KW"/>
</dbReference>
<dbReference type="GO" id="GO:0046166">
    <property type="term" value="P:glyceraldehyde-3-phosphate biosynthetic process"/>
    <property type="evidence" value="ECO:0007669"/>
    <property type="project" value="TreeGrafter"/>
</dbReference>
<dbReference type="GO" id="GO:0019563">
    <property type="term" value="P:glycerol catabolic process"/>
    <property type="evidence" value="ECO:0007669"/>
    <property type="project" value="TreeGrafter"/>
</dbReference>
<dbReference type="GO" id="GO:0006096">
    <property type="term" value="P:glycolytic process"/>
    <property type="evidence" value="ECO:0007669"/>
    <property type="project" value="UniProtKB-KW"/>
</dbReference>
<dbReference type="GO" id="GO:0006098">
    <property type="term" value="P:pentose-phosphate shunt"/>
    <property type="evidence" value="ECO:0007669"/>
    <property type="project" value="UniProtKB-KW"/>
</dbReference>
<dbReference type="CDD" id="cd00311">
    <property type="entry name" value="TIM"/>
    <property type="match status" value="1"/>
</dbReference>
<dbReference type="Gene3D" id="3.20.20.70">
    <property type="entry name" value="Aldolase class I"/>
    <property type="match status" value="1"/>
</dbReference>
<dbReference type="InterPro" id="IPR013785">
    <property type="entry name" value="Aldolase_TIM"/>
</dbReference>
<dbReference type="InterPro" id="IPR035990">
    <property type="entry name" value="TIM_sf"/>
</dbReference>
<dbReference type="InterPro" id="IPR000652">
    <property type="entry name" value="Triosephosphate_isomerase"/>
</dbReference>
<dbReference type="InterPro" id="IPR020861">
    <property type="entry name" value="Triosephosphate_isomerase_AS"/>
</dbReference>
<dbReference type="NCBIfam" id="NF000722">
    <property type="entry name" value="PRK00042.2-1"/>
    <property type="match status" value="1"/>
</dbReference>
<dbReference type="PANTHER" id="PTHR21139">
    <property type="entry name" value="TRIOSEPHOSPHATE ISOMERASE"/>
    <property type="match status" value="1"/>
</dbReference>
<dbReference type="PANTHER" id="PTHR21139:SF42">
    <property type="entry name" value="TRIOSEPHOSPHATE ISOMERASE"/>
    <property type="match status" value="1"/>
</dbReference>
<dbReference type="Pfam" id="PF00121">
    <property type="entry name" value="TIM"/>
    <property type="match status" value="1"/>
</dbReference>
<dbReference type="SUPFAM" id="SSF51351">
    <property type="entry name" value="Triosephosphate isomerase (TIM)"/>
    <property type="match status" value="1"/>
</dbReference>
<dbReference type="PROSITE" id="PS00171">
    <property type="entry name" value="TIM_1"/>
    <property type="match status" value="1"/>
</dbReference>
<dbReference type="PROSITE" id="PS51440">
    <property type="entry name" value="TIM_2"/>
    <property type="match status" value="1"/>
</dbReference>
<feature type="chain" id="PRO_0000090189" description="L-erythrulose-1-phosphate isomerase">
    <location>
        <begin position="1"/>
        <end position="256"/>
    </location>
</feature>
<feature type="active site" description="Electrophile" evidence="1">
    <location>
        <position position="96"/>
    </location>
</feature>
<feature type="active site" description="Proton acceptor" evidence="1">
    <location>
        <position position="169"/>
    </location>
</feature>
<feature type="binding site" evidence="1">
    <location>
        <position position="175"/>
    </location>
    <ligand>
        <name>substrate</name>
    </ligand>
</feature>
<feature type="binding site" evidence="1">
    <location>
        <position position="212"/>
    </location>
    <ligand>
        <name>substrate</name>
    </ligand>
</feature>
<evidence type="ECO:0000250" key="1">
    <source>
        <dbReference type="UniProtKB" id="P9WG43"/>
    </source>
</evidence>
<evidence type="ECO:0000250" key="2">
    <source>
        <dbReference type="UniProtKB" id="Q2YIQ6"/>
    </source>
</evidence>
<evidence type="ECO:0000305" key="3"/>
<keyword id="KW-0963">Cytoplasm</keyword>
<keyword id="KW-0312">Gluconeogenesis</keyword>
<keyword id="KW-0324">Glycolysis</keyword>
<keyword id="KW-0413">Isomerase</keyword>
<keyword id="KW-0570">Pentose shunt</keyword>
<gene>
    <name evidence="2" type="primary">eryH</name>
    <name type="synonym">tpiA</name>
    <name type="synonym">tpiA-2</name>
    <name type="ordered locus">BruAb2_0363</name>
</gene>
<name>ERYH_BRUAB</name>